<proteinExistence type="evidence at protein level"/>
<reference key="1">
    <citation type="journal article" date="1994" name="Dev. Biol.">
        <title>Embryonic expression of mouse bone morphogenetic protein-1 (BMP-1), which is related to the Drosophila dorsoventral gene tolloid and encodes a putative astacin metalloendopeptidase.</title>
        <authorList>
            <person name="Fukagawa M."/>
            <person name="Noboru S."/>
            <person name="Hogan B.L.M."/>
            <person name="Jones C.M."/>
        </authorList>
    </citation>
    <scope>NUCLEOTIDE SEQUENCE [MRNA]</scope>
    <source>
        <strain>C57BL/6J</strain>
        <tissue>Embryo</tissue>
    </source>
</reference>
<reference key="2">
    <citation type="journal article" date="2009" name="PLoS Biol.">
        <title>Lineage-specific biology revealed by a finished genome assembly of the mouse.</title>
        <authorList>
            <person name="Church D.M."/>
            <person name="Goodstadt L."/>
            <person name="Hillier L.W."/>
            <person name="Zody M.C."/>
            <person name="Goldstein S."/>
            <person name="She X."/>
            <person name="Bult C.J."/>
            <person name="Agarwala R."/>
            <person name="Cherry J.L."/>
            <person name="DiCuccio M."/>
            <person name="Hlavina W."/>
            <person name="Kapustin Y."/>
            <person name="Meric P."/>
            <person name="Maglott D."/>
            <person name="Birtle Z."/>
            <person name="Marques A.C."/>
            <person name="Graves T."/>
            <person name="Zhou S."/>
            <person name="Teague B."/>
            <person name="Potamousis K."/>
            <person name="Churas C."/>
            <person name="Place M."/>
            <person name="Herschleb J."/>
            <person name="Runnheim R."/>
            <person name="Forrest D."/>
            <person name="Amos-Landgraf J."/>
            <person name="Schwartz D.C."/>
            <person name="Cheng Z."/>
            <person name="Lindblad-Toh K."/>
            <person name="Eichler E.E."/>
            <person name="Ponting C.P."/>
        </authorList>
    </citation>
    <scope>NUCLEOTIDE SEQUENCE [LARGE SCALE GENOMIC DNA]</scope>
    <source>
        <strain>C57BL/6J</strain>
    </source>
</reference>
<reference key="3">
    <citation type="journal article" date="2004" name="Genome Res.">
        <title>The status, quality, and expansion of the NIH full-length cDNA project: the Mammalian Gene Collection (MGC).</title>
        <authorList>
            <consortium name="The MGC Project Team"/>
        </authorList>
    </citation>
    <scope>NUCLEOTIDE SEQUENCE [LARGE SCALE MRNA]</scope>
    <source>
        <strain>C57BL/6J</strain>
        <tissue>Brain</tissue>
    </source>
</reference>
<reference key="4">
    <citation type="journal article" date="1996" name="Development">
        <title>Failure of ventral body wall closure in mouse embryos lacking a procollagen C-proteinase encoded by Bmp1, a mammalian gene related to Drosophila tolloid.</title>
        <authorList>
            <person name="Suzuki N."/>
            <person name="Labosky P.A."/>
            <person name="Furuta Y."/>
            <person name="Hargett L."/>
            <person name="Dunn R."/>
            <person name="Fogo A.B."/>
            <person name="Takahara K."/>
            <person name="Peters D.M."/>
            <person name="Greenspan D.S."/>
            <person name="Hogan B.L."/>
        </authorList>
    </citation>
    <scope>FUNCTION</scope>
    <scope>DISRUPTION PHENOTYPE</scope>
</reference>
<reference key="5">
    <citation type="journal article" date="2010" name="J. Biol. Chem.">
        <title>Interaction between periostin and BMP-1 promotes proteolytic activation of lysyl oxidase.</title>
        <authorList>
            <person name="Maruhashi T."/>
            <person name="Kii I."/>
            <person name="Saito M."/>
            <person name="Kudo A."/>
        </authorList>
    </citation>
    <scope>FUNCTION</scope>
    <scope>INTERACTION WITH POSTN</scope>
    <scope>SUBCELLULAR LOCATION</scope>
</reference>
<reference key="6">
    <citation type="journal article" date="2014" name="Hum. Mol. Genet.">
        <title>Induced ablation of Bmp1 and Tll1 produces osteogenesis imperfecta in mice.</title>
        <authorList>
            <person name="Muir A.M."/>
            <person name="Ren Y."/>
            <person name="Butz D.H."/>
            <person name="Davis N.A."/>
            <person name="Blank R.D."/>
            <person name="Birk D.E."/>
            <person name="Lee S.J."/>
            <person name="Rowe D."/>
            <person name="Feng J.Q."/>
            <person name="Greenspan D.S."/>
        </authorList>
    </citation>
    <scope>FUNCTION</scope>
    <scope>DISRUPTION PHENOTYPE</scope>
</reference>
<reference key="7">
    <citation type="journal article" date="2017" name="J. Dent. Res.">
        <title>BMP1 and TLL1 Are Required for Maintaining Periodontal Homeostasis.</title>
        <authorList>
            <person name="Wang J."/>
            <person name="Massoudi D."/>
            <person name="Ren Y."/>
            <person name="Muir A.M."/>
            <person name="Harris S.E."/>
            <person name="Greenspan D.S."/>
            <person name="Feng J.Q."/>
        </authorList>
    </citation>
    <scope>FUNCTION</scope>
    <scope>DISRUPTION PHENOTYPE</scope>
</reference>
<evidence type="ECO:0000250" key="1"/>
<evidence type="ECO:0000250" key="2">
    <source>
        <dbReference type="UniProtKB" id="P13497"/>
    </source>
</evidence>
<evidence type="ECO:0000250" key="3">
    <source>
        <dbReference type="UniProtKB" id="Q9WVM6"/>
    </source>
</evidence>
<evidence type="ECO:0000255" key="4"/>
<evidence type="ECO:0000255" key="5">
    <source>
        <dbReference type="PROSITE-ProRule" id="PRU00059"/>
    </source>
</evidence>
<evidence type="ECO:0000255" key="6">
    <source>
        <dbReference type="PROSITE-ProRule" id="PRU00076"/>
    </source>
</evidence>
<evidence type="ECO:0000255" key="7">
    <source>
        <dbReference type="PROSITE-ProRule" id="PRU01211"/>
    </source>
</evidence>
<evidence type="ECO:0000256" key="8">
    <source>
        <dbReference type="SAM" id="MobiDB-lite"/>
    </source>
</evidence>
<evidence type="ECO:0000269" key="9">
    <source>
    </source>
</evidence>
<evidence type="ECO:0000269" key="10">
    <source>
    </source>
</evidence>
<evidence type="ECO:0000269" key="11">
    <source>
    </source>
</evidence>
<evidence type="ECO:0000269" key="12">
    <source>
    </source>
</evidence>
<evidence type="ECO:0000305" key="13"/>
<gene>
    <name type="primary">Bmp1</name>
</gene>
<name>BMP1_MOUSE</name>
<organism>
    <name type="scientific">Mus musculus</name>
    <name type="common">Mouse</name>
    <dbReference type="NCBI Taxonomy" id="10090"/>
    <lineage>
        <taxon>Eukaryota</taxon>
        <taxon>Metazoa</taxon>
        <taxon>Chordata</taxon>
        <taxon>Craniata</taxon>
        <taxon>Vertebrata</taxon>
        <taxon>Euteleostomi</taxon>
        <taxon>Mammalia</taxon>
        <taxon>Eutheria</taxon>
        <taxon>Euarchontoglires</taxon>
        <taxon>Glires</taxon>
        <taxon>Rodentia</taxon>
        <taxon>Myomorpha</taxon>
        <taxon>Muroidea</taxon>
        <taxon>Muridae</taxon>
        <taxon>Murinae</taxon>
        <taxon>Mus</taxon>
        <taxon>Mus</taxon>
    </lineage>
</organism>
<protein>
    <recommendedName>
        <fullName>Bone morphogenetic protein 1</fullName>
        <shortName>BMP-1</shortName>
        <ecNumber>3.4.24.19</ecNumber>
    </recommendedName>
    <alternativeName>
        <fullName>Mammalian tolloid protein</fullName>
        <shortName>mTld</shortName>
    </alternativeName>
    <alternativeName>
        <fullName>Procollagen C-proteinase</fullName>
        <shortName>PCP</shortName>
    </alternativeName>
</protein>
<comment type="function">
    <text evidence="2 9 10 11 12">Metalloprotease that plays key roles in regulating the formation of the extracellular matrix (ECM) via processing of various precursor proteins into mature functional enzymes or structural proteins. Thereby participates in several developmental and physiological processes such as cartilage and bone formation, muscle growth and homeostasis, wound healing and tissue repair (PubMed:24419319, PubMed:28068493, PubMed:8951074). Roles in ECM formation include cleavage of the C-terminal propeptides from procollagens such as procollagen I, II and III or the proteolytic activation of the enzyme lysyl oxidase LOX, necessary to formation of covalent cross-links in collagen and elastic fibers (PubMed:20181949). Additional substrates include matricellular thrombospondin-1/THBS1 whose cleavage leads to cell adhesion disruption and TGF-beta activation (By similarity).</text>
</comment>
<comment type="catalytic activity">
    <reaction>
        <text>Cleavage of the C-terminal propeptide at Ala-|-Asp in type I and II procollagens and at Arg-|-Asp in type III.</text>
        <dbReference type="EC" id="3.4.24.19"/>
    </reaction>
</comment>
<comment type="cofactor">
    <cofactor evidence="7">
        <name>Zn(2+)</name>
        <dbReference type="ChEBI" id="CHEBI:29105"/>
    </cofactor>
    <text evidence="7">Binds 1 zinc ion per subunit.</text>
</comment>
<comment type="activity regulation">
    <text>Activity is increased by the procollagen C-endopeptidase enhancer protein.</text>
</comment>
<comment type="subunit">
    <text evidence="9">Interacts with POSTN, the interaction promotes deposition on the extracellular matrix.</text>
</comment>
<comment type="subcellular location">
    <subcellularLocation>
        <location evidence="9">Golgi apparatus</location>
        <location evidence="9">trans-Golgi network</location>
    </subcellularLocation>
    <subcellularLocation>
        <location evidence="9">Secreted</location>
        <location evidence="9">Extracellular space</location>
        <location evidence="9">Extracellular matrix</location>
    </subcellularLocation>
    <subcellularLocation>
        <location evidence="2">Secreted</location>
    </subcellularLocation>
    <text>Co-localizes with POSTN in the Golgi.</text>
</comment>
<comment type="tissue specificity">
    <text>At high levels in embryonic maternal deciduum and floor plate region of the neural tube. Less in developing membranous and endochondral bone, submucosa of intestine, dermis of skin and the mesenchyme of spleen and lung.</text>
</comment>
<comment type="disruption phenotype">
    <text evidence="10 11 12">Deletion mice are perinatally lethal, with the most obvious gross abnormality being failure of ventral body wall closure, and persistent herniation of the gut. This phenotype likely reflects the defective and weakened nature of extracellular matrix (ECM) in these embryos (PubMed:8951074). Double knockout mice (BMP1 and TLL1) display progressive defects in teeth and bone development (PubMed:24419319, PubMed:28068493).</text>
</comment>
<comment type="sequence caution" evidence="13">
    <conflict type="frameshift">
        <sequence resource="EMBL-CDS" id="AAA37306"/>
    </conflict>
</comment>
<sequence length="991" mass="111666">MPGVARPPLPLLSLPLLLLLLLLPRAGRPLDLADYTYDLGEEDAPELLNYKDPCKAAAFLGDIALDEEDLRAFQVQQAAVLRQQTARRPSIKAAGNSSALGGQGTSGQPQRESRGRWRGRPRSRRAATSRPERVWPDGVIPFVIGGNFTGSQRAVFRQAMRHWEKHTCVTFLERTDEDSYIVFTYRPCGCCSYVGRRGGGPQAISIGKNCDKFGIVVHELGHVIGFWHEHTRPDRDRHVSIVRENIQPGQEYNFLKMEVQEVESLGETYDFDSIMHYARNTFSRGIFLDTIVPKYEVNGVKPSIGQRTRLSKGDIAQARKLYKCPACGETLQDSTGNFSSPEYPNGYSAHMHCVWRISVTPGEKIILNFTSMDLYRSRLCWYDYVEVRDGFWRKAPLRGRFCGGKLPEPIVSTDSRLWVEFRSSSNWVGKGFFAVYEAICGGDVKKDNGHIQSPNYPDDYRPSKVCIWRIQVSEGFHVGLTFQSFEIERHDSCAYDYLEVRDGHSESSNLIGRYCGYEKPDDIKSTSSRLWLKFVSDGSINKAGFAVNFFKEVDECSRPNRGGCEQRCLNTLGSYKCSCDPGYELAPDKRRCEAACGGFLTKLNGSITSPGWPKEYPPNKNCIWQLVAPTQYRISLQFDFFETEGNDVCKYDFVEVRSGLTADSKLHGKFCGSEKPEVITSQYNNMRVEFKSDNTVSKKGFKAHFFSDKDECSKDNGGCQQDCVNTFGSYECQCRSGFVLHDNKHDCKEAGCEHKVTSTSGTITSPNWPDKYPSKKECTWAISSTPGHRVKLTFVEMDIESQPECAYDHLEVFDGRDAKAPVLGRFCGSKKPEPVLATGNRMFLRFYSDNSVQRKGFQASHSTECGGQVRADVKTKDLYSHAQFGDNNYPGGVDCEWVIVAEEGYGVELVFQTFEVEEETDCGYDYIELFDGYDSTAPRLGRYCGSGPPEEVYSAGDSVLVKFHSDDTISKKGFHLRYTSTKFQDTLHSRK</sequence>
<keyword id="KW-0106">Calcium</keyword>
<keyword id="KW-0891">Chondrogenesis</keyword>
<keyword id="KW-0165">Cleavage on pair of basic residues</keyword>
<keyword id="KW-0202">Cytokine</keyword>
<keyword id="KW-0217">Developmental protein</keyword>
<keyword id="KW-0221">Differentiation</keyword>
<keyword id="KW-1015">Disulfide bond</keyword>
<keyword id="KW-0245">EGF-like domain</keyword>
<keyword id="KW-0272">Extracellular matrix</keyword>
<keyword id="KW-0325">Glycoprotein</keyword>
<keyword id="KW-0333">Golgi apparatus</keyword>
<keyword id="KW-0339">Growth factor</keyword>
<keyword id="KW-0378">Hydrolase</keyword>
<keyword id="KW-0479">Metal-binding</keyword>
<keyword id="KW-0482">Metalloprotease</keyword>
<keyword id="KW-0488">Methylation</keyword>
<keyword id="KW-0892">Osteogenesis</keyword>
<keyword id="KW-0645">Protease</keyword>
<keyword id="KW-1185">Reference proteome</keyword>
<keyword id="KW-0677">Repeat</keyword>
<keyword id="KW-0964">Secreted</keyword>
<keyword id="KW-0732">Signal</keyword>
<keyword id="KW-0862">Zinc</keyword>
<keyword id="KW-0865">Zymogen</keyword>
<dbReference type="EC" id="3.4.24.19"/>
<dbReference type="EMBL" id="L24755">
    <property type="protein sequence ID" value="AAA37306.1"/>
    <property type="status" value="ALT_FRAME"/>
    <property type="molecule type" value="mRNA"/>
</dbReference>
<dbReference type="EMBL" id="AC122268">
    <property type="status" value="NOT_ANNOTATED_CDS"/>
    <property type="molecule type" value="Genomic_DNA"/>
</dbReference>
<dbReference type="EMBL" id="BC066062">
    <property type="protein sequence ID" value="AAH66062.1"/>
    <property type="molecule type" value="mRNA"/>
</dbReference>
<dbReference type="CCDS" id="CCDS36972.1"/>
<dbReference type="PIR" id="I49540">
    <property type="entry name" value="I49540"/>
</dbReference>
<dbReference type="RefSeq" id="NP_001346950.1">
    <property type="nucleotide sequence ID" value="NM_001360021.2"/>
</dbReference>
<dbReference type="RefSeq" id="NP_033885.2">
    <property type="nucleotide sequence ID" value="NM_009755.3"/>
</dbReference>
<dbReference type="RefSeq" id="XP_006518523.1">
    <property type="nucleotide sequence ID" value="XM_006518460.3"/>
</dbReference>
<dbReference type="SMR" id="P98063"/>
<dbReference type="BioGRID" id="198360">
    <property type="interactions" value="6"/>
</dbReference>
<dbReference type="FunCoup" id="P98063">
    <property type="interactions" value="148"/>
</dbReference>
<dbReference type="IntAct" id="P98063">
    <property type="interactions" value="2"/>
</dbReference>
<dbReference type="STRING" id="10090.ENSMUSP00000022693"/>
<dbReference type="MEROPS" id="M12.005"/>
<dbReference type="GlyCosmos" id="P98063">
    <property type="glycosylation" value="5 sites, No reported glycans"/>
</dbReference>
<dbReference type="GlyGen" id="P98063">
    <property type="glycosylation" value="7 sites, 2 N-linked glycans (3 sites)"/>
</dbReference>
<dbReference type="iPTMnet" id="P98063"/>
<dbReference type="PhosphoSitePlus" id="P98063"/>
<dbReference type="CPTAC" id="non-CPTAC-3562"/>
<dbReference type="jPOST" id="P98063"/>
<dbReference type="PaxDb" id="10090-ENSMUSP00000022693"/>
<dbReference type="PeptideAtlas" id="P98063"/>
<dbReference type="ProteomicsDB" id="273748"/>
<dbReference type="Pumba" id="P98063"/>
<dbReference type="Antibodypedia" id="2912">
    <property type="antibodies" value="327 antibodies from 36 providers"/>
</dbReference>
<dbReference type="DNASU" id="12153"/>
<dbReference type="Ensembl" id="ENSMUST00000022693.9">
    <property type="protein sequence ID" value="ENSMUSP00000022693.8"/>
    <property type="gene ID" value="ENSMUSG00000022098.11"/>
</dbReference>
<dbReference type="GeneID" id="12153"/>
<dbReference type="KEGG" id="mmu:12153"/>
<dbReference type="UCSC" id="uc007uoc.2">
    <property type="organism name" value="mouse"/>
</dbReference>
<dbReference type="AGR" id="MGI:88176"/>
<dbReference type="CTD" id="649"/>
<dbReference type="MGI" id="MGI:88176">
    <property type="gene designation" value="Bmp1"/>
</dbReference>
<dbReference type="VEuPathDB" id="HostDB:ENSMUSG00000022098"/>
<dbReference type="eggNOG" id="KOG3714">
    <property type="taxonomic scope" value="Eukaryota"/>
</dbReference>
<dbReference type="GeneTree" id="ENSGT00940000157176"/>
<dbReference type="HOGENOM" id="CLU_005140_0_0_1"/>
<dbReference type="InParanoid" id="P98063"/>
<dbReference type="OMA" id="RTVQTIN"/>
<dbReference type="OrthoDB" id="431034at2759"/>
<dbReference type="PhylomeDB" id="P98063"/>
<dbReference type="TreeFam" id="TF314351"/>
<dbReference type="BRENDA" id="3.4.24.19">
    <property type="organism ID" value="3474"/>
</dbReference>
<dbReference type="Reactome" id="R-MMU-1650814">
    <property type="pathway name" value="Collagen biosynthesis and modifying enzymes"/>
</dbReference>
<dbReference type="Reactome" id="R-MMU-2214320">
    <property type="pathway name" value="Anchoring fibril formation"/>
</dbReference>
<dbReference type="Reactome" id="R-MMU-2243919">
    <property type="pathway name" value="Crosslinking of collagen fibrils"/>
</dbReference>
<dbReference type="Reactome" id="R-MMU-8963896">
    <property type="pathway name" value="HDL assembly"/>
</dbReference>
<dbReference type="BioGRID-ORCS" id="12153">
    <property type="hits" value="2 hits in 82 CRISPR screens"/>
</dbReference>
<dbReference type="ChiTaRS" id="Bmp1">
    <property type="organism name" value="mouse"/>
</dbReference>
<dbReference type="PRO" id="PR:P98063"/>
<dbReference type="Proteomes" id="UP000000589">
    <property type="component" value="Chromosome 14"/>
</dbReference>
<dbReference type="RNAct" id="P98063">
    <property type="molecule type" value="protein"/>
</dbReference>
<dbReference type="Bgee" id="ENSMUSG00000022098">
    <property type="expression patterns" value="Expressed in gastrula and 259 other cell types or tissues"/>
</dbReference>
<dbReference type="ExpressionAtlas" id="P98063">
    <property type="expression patterns" value="baseline and differential"/>
</dbReference>
<dbReference type="GO" id="GO:0062023">
    <property type="term" value="C:collagen-containing extracellular matrix"/>
    <property type="evidence" value="ECO:0007005"/>
    <property type="project" value="BHF-UCL"/>
</dbReference>
<dbReference type="GO" id="GO:0005615">
    <property type="term" value="C:extracellular space"/>
    <property type="evidence" value="ECO:0007005"/>
    <property type="project" value="BHF-UCL"/>
</dbReference>
<dbReference type="GO" id="GO:0005794">
    <property type="term" value="C:Golgi apparatus"/>
    <property type="evidence" value="ECO:0007669"/>
    <property type="project" value="UniProtKB-SubCell"/>
</dbReference>
<dbReference type="GO" id="GO:0031982">
    <property type="term" value="C:vesicle"/>
    <property type="evidence" value="ECO:0007669"/>
    <property type="project" value="Ensembl"/>
</dbReference>
<dbReference type="GO" id="GO:0005509">
    <property type="term" value="F:calcium ion binding"/>
    <property type="evidence" value="ECO:0007669"/>
    <property type="project" value="InterPro"/>
</dbReference>
<dbReference type="GO" id="GO:0005125">
    <property type="term" value="F:cytokine activity"/>
    <property type="evidence" value="ECO:0007669"/>
    <property type="project" value="UniProtKB-KW"/>
</dbReference>
<dbReference type="GO" id="GO:0008083">
    <property type="term" value="F:growth factor activity"/>
    <property type="evidence" value="ECO:0007669"/>
    <property type="project" value="UniProtKB-KW"/>
</dbReference>
<dbReference type="GO" id="GO:0042802">
    <property type="term" value="F:identical protein binding"/>
    <property type="evidence" value="ECO:0007669"/>
    <property type="project" value="Ensembl"/>
</dbReference>
<dbReference type="GO" id="GO:0004222">
    <property type="term" value="F:metalloendopeptidase activity"/>
    <property type="evidence" value="ECO:0000314"/>
    <property type="project" value="MGI"/>
</dbReference>
<dbReference type="GO" id="GO:0008233">
    <property type="term" value="F:peptidase activity"/>
    <property type="evidence" value="ECO:0000266"/>
    <property type="project" value="MGI"/>
</dbReference>
<dbReference type="GO" id="GO:0008270">
    <property type="term" value="F:zinc ion binding"/>
    <property type="evidence" value="ECO:0007669"/>
    <property type="project" value="InterPro"/>
</dbReference>
<dbReference type="GO" id="GO:0051216">
    <property type="term" value="P:cartilage development"/>
    <property type="evidence" value="ECO:0007669"/>
    <property type="project" value="UniProtKB-KW"/>
</dbReference>
<dbReference type="GO" id="GO:0030154">
    <property type="term" value="P:cell differentiation"/>
    <property type="evidence" value="ECO:0007669"/>
    <property type="project" value="UniProtKB-KW"/>
</dbReference>
<dbReference type="GO" id="GO:0001503">
    <property type="term" value="P:ossification"/>
    <property type="evidence" value="ECO:0007669"/>
    <property type="project" value="UniProtKB-KW"/>
</dbReference>
<dbReference type="GO" id="GO:0061036">
    <property type="term" value="P:positive regulation of cartilage development"/>
    <property type="evidence" value="ECO:0000266"/>
    <property type="project" value="MGI"/>
</dbReference>
<dbReference type="GO" id="GO:0006508">
    <property type="term" value="P:proteolysis"/>
    <property type="evidence" value="ECO:0007669"/>
    <property type="project" value="UniProtKB-KW"/>
</dbReference>
<dbReference type="CDD" id="cd00041">
    <property type="entry name" value="CUB"/>
    <property type="match status" value="5"/>
</dbReference>
<dbReference type="CDD" id="cd00054">
    <property type="entry name" value="EGF_CA"/>
    <property type="match status" value="1"/>
</dbReference>
<dbReference type="CDD" id="cd04281">
    <property type="entry name" value="ZnMc_BMP1_TLD"/>
    <property type="match status" value="1"/>
</dbReference>
<dbReference type="FunFam" id="2.10.25.10:FF:000022">
    <property type="entry name" value="Metalloendopeptidase"/>
    <property type="match status" value="2"/>
</dbReference>
<dbReference type="FunFam" id="2.60.120.290:FF:000004">
    <property type="entry name" value="Metalloendopeptidase"/>
    <property type="match status" value="1"/>
</dbReference>
<dbReference type="FunFam" id="2.60.120.290:FF:000007">
    <property type="entry name" value="Metalloendopeptidase"/>
    <property type="match status" value="1"/>
</dbReference>
<dbReference type="FunFam" id="2.60.120.290:FF:000009">
    <property type="entry name" value="Metalloendopeptidase"/>
    <property type="match status" value="1"/>
</dbReference>
<dbReference type="FunFam" id="2.60.120.290:FF:000011">
    <property type="entry name" value="Metalloendopeptidase"/>
    <property type="match status" value="1"/>
</dbReference>
<dbReference type="FunFam" id="2.60.120.290:FF:000014">
    <property type="entry name" value="Metalloendopeptidase"/>
    <property type="match status" value="1"/>
</dbReference>
<dbReference type="FunFam" id="3.40.390.10:FF:000004">
    <property type="entry name" value="Metalloendopeptidase"/>
    <property type="match status" value="1"/>
</dbReference>
<dbReference type="Gene3D" id="3.40.390.10">
    <property type="entry name" value="Collagenase (Catalytic Domain)"/>
    <property type="match status" value="1"/>
</dbReference>
<dbReference type="Gene3D" id="2.10.25.10">
    <property type="entry name" value="Laminin"/>
    <property type="match status" value="2"/>
</dbReference>
<dbReference type="Gene3D" id="2.60.120.290">
    <property type="entry name" value="Spermadhesin, CUB domain"/>
    <property type="match status" value="5"/>
</dbReference>
<dbReference type="InterPro" id="IPR015446">
    <property type="entry name" value="BMP_1/tolloid-like"/>
</dbReference>
<dbReference type="InterPro" id="IPR000859">
    <property type="entry name" value="CUB_dom"/>
</dbReference>
<dbReference type="InterPro" id="IPR001881">
    <property type="entry name" value="EGF-like_Ca-bd_dom"/>
</dbReference>
<dbReference type="InterPro" id="IPR000742">
    <property type="entry name" value="EGF-like_dom"/>
</dbReference>
<dbReference type="InterPro" id="IPR000152">
    <property type="entry name" value="EGF-type_Asp/Asn_hydroxyl_site"/>
</dbReference>
<dbReference type="InterPro" id="IPR018097">
    <property type="entry name" value="EGF_Ca-bd_CS"/>
</dbReference>
<dbReference type="InterPro" id="IPR024079">
    <property type="entry name" value="MetalloPept_cat_dom_sf"/>
</dbReference>
<dbReference type="InterPro" id="IPR049883">
    <property type="entry name" value="NOTCH1_EGF-like"/>
</dbReference>
<dbReference type="InterPro" id="IPR001506">
    <property type="entry name" value="Peptidase_M12A"/>
</dbReference>
<dbReference type="InterPro" id="IPR006026">
    <property type="entry name" value="Peptidase_Metallo"/>
</dbReference>
<dbReference type="InterPro" id="IPR035914">
    <property type="entry name" value="Sperma_CUB_dom_sf"/>
</dbReference>
<dbReference type="InterPro" id="IPR034036">
    <property type="entry name" value="ZnMP_TLD/BMP1"/>
</dbReference>
<dbReference type="PANTHER" id="PTHR24251:SF53">
    <property type="entry name" value="BONE MORPHOGENETIC PROTEIN 1"/>
    <property type="match status" value="1"/>
</dbReference>
<dbReference type="PANTHER" id="PTHR24251">
    <property type="entry name" value="OVOCHYMASE-RELATED"/>
    <property type="match status" value="1"/>
</dbReference>
<dbReference type="Pfam" id="PF01400">
    <property type="entry name" value="Astacin"/>
    <property type="match status" value="1"/>
</dbReference>
<dbReference type="Pfam" id="PF00431">
    <property type="entry name" value="CUB"/>
    <property type="match status" value="5"/>
</dbReference>
<dbReference type="Pfam" id="PF07645">
    <property type="entry name" value="EGF_CA"/>
    <property type="match status" value="1"/>
</dbReference>
<dbReference type="Pfam" id="PF14670">
    <property type="entry name" value="FXa_inhibition"/>
    <property type="match status" value="1"/>
</dbReference>
<dbReference type="PIRSF" id="PIRSF001199">
    <property type="entry name" value="BMP_1/tolloid-like"/>
    <property type="match status" value="1"/>
</dbReference>
<dbReference type="PRINTS" id="PR00480">
    <property type="entry name" value="ASTACIN"/>
</dbReference>
<dbReference type="SMART" id="SM00042">
    <property type="entry name" value="CUB"/>
    <property type="match status" value="5"/>
</dbReference>
<dbReference type="SMART" id="SM00181">
    <property type="entry name" value="EGF"/>
    <property type="match status" value="2"/>
</dbReference>
<dbReference type="SMART" id="SM00179">
    <property type="entry name" value="EGF_CA"/>
    <property type="match status" value="2"/>
</dbReference>
<dbReference type="SMART" id="SM00235">
    <property type="entry name" value="ZnMc"/>
    <property type="match status" value="1"/>
</dbReference>
<dbReference type="SUPFAM" id="SSF57196">
    <property type="entry name" value="EGF/Laminin"/>
    <property type="match status" value="2"/>
</dbReference>
<dbReference type="SUPFAM" id="SSF55486">
    <property type="entry name" value="Metalloproteases ('zincins'), catalytic domain"/>
    <property type="match status" value="1"/>
</dbReference>
<dbReference type="SUPFAM" id="SSF49854">
    <property type="entry name" value="Spermadhesin, CUB domain"/>
    <property type="match status" value="5"/>
</dbReference>
<dbReference type="PROSITE" id="PS51864">
    <property type="entry name" value="ASTACIN"/>
    <property type="match status" value="1"/>
</dbReference>
<dbReference type="PROSITE" id="PS00010">
    <property type="entry name" value="ASX_HYDROXYL"/>
    <property type="match status" value="2"/>
</dbReference>
<dbReference type="PROSITE" id="PS01180">
    <property type="entry name" value="CUB"/>
    <property type="match status" value="5"/>
</dbReference>
<dbReference type="PROSITE" id="PS01186">
    <property type="entry name" value="EGF_2"/>
    <property type="match status" value="2"/>
</dbReference>
<dbReference type="PROSITE" id="PS50026">
    <property type="entry name" value="EGF_3"/>
    <property type="match status" value="2"/>
</dbReference>
<dbReference type="PROSITE" id="PS01187">
    <property type="entry name" value="EGF_CA"/>
    <property type="match status" value="2"/>
</dbReference>
<dbReference type="PROSITE" id="PS00142">
    <property type="entry name" value="ZINC_PROTEASE"/>
    <property type="match status" value="1"/>
</dbReference>
<feature type="signal peptide" evidence="4">
    <location>
        <begin position="1"/>
        <end position="25"/>
    </location>
</feature>
<feature type="propeptide" id="PRO_0000028891" evidence="2">
    <location>
        <begin position="26"/>
        <end position="125"/>
    </location>
</feature>
<feature type="chain" id="PRO_0000028892" description="Bone morphogenetic protein 1">
    <location>
        <begin position="126"/>
        <end position="991"/>
    </location>
</feature>
<feature type="domain" description="Peptidase M12A" evidence="7">
    <location>
        <begin position="126"/>
        <end position="325"/>
    </location>
</feature>
<feature type="domain" description="CUB 1" evidence="5">
    <location>
        <begin position="327"/>
        <end position="439"/>
    </location>
</feature>
<feature type="domain" description="CUB 2" evidence="5">
    <location>
        <begin position="440"/>
        <end position="551"/>
    </location>
</feature>
<feature type="domain" description="EGF-like 1; calcium-binding" evidence="6">
    <location>
        <begin position="552"/>
        <end position="593"/>
    </location>
</feature>
<feature type="domain" description="CUB 3" evidence="5">
    <location>
        <begin position="596"/>
        <end position="707"/>
    </location>
</feature>
<feature type="domain" description="EGF-like 2; calcium-binding" evidence="6">
    <location>
        <begin position="708"/>
        <end position="748"/>
    </location>
</feature>
<feature type="domain" description="CUB 4" evidence="5">
    <location>
        <begin position="752"/>
        <end position="864"/>
    </location>
</feature>
<feature type="domain" description="CUB 5" evidence="5">
    <location>
        <begin position="865"/>
        <end position="981"/>
    </location>
</feature>
<feature type="region of interest" description="Disordered" evidence="8">
    <location>
        <begin position="86"/>
        <end position="131"/>
    </location>
</feature>
<feature type="compositionally biased region" description="Polar residues" evidence="8">
    <location>
        <begin position="95"/>
        <end position="110"/>
    </location>
</feature>
<feature type="compositionally biased region" description="Basic residues" evidence="8">
    <location>
        <begin position="116"/>
        <end position="127"/>
    </location>
</feature>
<feature type="active site" evidence="7">
    <location>
        <position position="219"/>
    </location>
</feature>
<feature type="binding site" evidence="7">
    <location>
        <position position="218"/>
    </location>
    <ligand>
        <name>Zn(2+)</name>
        <dbReference type="ChEBI" id="CHEBI:29105"/>
        <note>catalytic</note>
    </ligand>
</feature>
<feature type="binding site" evidence="7">
    <location>
        <position position="222"/>
    </location>
    <ligand>
        <name>Zn(2+)</name>
        <dbReference type="ChEBI" id="CHEBI:29105"/>
        <note>catalytic</note>
    </ligand>
</feature>
<feature type="binding site" evidence="7">
    <location>
        <position position="228"/>
    </location>
    <ligand>
        <name>Zn(2+)</name>
        <dbReference type="ChEBI" id="CHEBI:29105"/>
        <note>catalytic</note>
    </ligand>
</feature>
<feature type="modified residue" description="Omega-N-methylarginine" evidence="3">
    <location>
        <position position="939"/>
    </location>
</feature>
<feature type="modified residue" description="Omega-N-methylarginine" evidence="3">
    <location>
        <position position="942"/>
    </location>
</feature>
<feature type="glycosylation site" description="N-linked (GlcNAc...) asparagine" evidence="4">
    <location>
        <position position="96"/>
    </location>
</feature>
<feature type="glycosylation site" description="N-linked (GlcNAc...) asparagine" evidence="4">
    <location>
        <position position="147"/>
    </location>
</feature>
<feature type="glycosylation site" description="N-linked (GlcNAc...) asparagine" evidence="4">
    <location>
        <position position="337"/>
    </location>
</feature>
<feature type="glycosylation site" description="N-linked (GlcNAc...) asparagine" evidence="4">
    <location>
        <position position="368"/>
    </location>
</feature>
<feature type="glycosylation site" description="N-linked (GlcNAc...) asparagine" evidence="4">
    <location>
        <position position="604"/>
    </location>
</feature>
<feature type="disulfide bond" evidence="7">
    <location>
        <begin position="168"/>
        <end position="324"/>
    </location>
</feature>
<feature type="disulfide bond" evidence="7">
    <location>
        <begin position="188"/>
        <end position="210"/>
    </location>
</feature>
<feature type="disulfide bond" evidence="7">
    <location>
        <begin position="190"/>
        <end position="191"/>
    </location>
</feature>
<feature type="disulfide bond" evidence="1">
    <location>
        <begin position="327"/>
        <end position="353"/>
    </location>
</feature>
<feature type="disulfide bond" evidence="1">
    <location>
        <begin position="380"/>
        <end position="402"/>
    </location>
</feature>
<feature type="disulfide bond" evidence="1">
    <location>
        <begin position="440"/>
        <end position="466"/>
    </location>
</feature>
<feature type="disulfide bond" evidence="1">
    <location>
        <begin position="493"/>
        <end position="515"/>
    </location>
</feature>
<feature type="disulfide bond" evidence="1">
    <location>
        <begin position="556"/>
        <end position="568"/>
    </location>
</feature>
<feature type="disulfide bond" evidence="1">
    <location>
        <begin position="564"/>
        <end position="577"/>
    </location>
</feature>
<feature type="disulfide bond" evidence="1">
    <location>
        <begin position="579"/>
        <end position="592"/>
    </location>
</feature>
<feature type="disulfide bond" evidence="1">
    <location>
        <begin position="596"/>
        <end position="622"/>
    </location>
</feature>
<feature type="disulfide bond" evidence="1">
    <location>
        <begin position="649"/>
        <end position="671"/>
    </location>
</feature>
<feature type="disulfide bond" evidence="1">
    <location>
        <begin position="712"/>
        <end position="723"/>
    </location>
</feature>
<feature type="disulfide bond" evidence="1">
    <location>
        <begin position="719"/>
        <end position="732"/>
    </location>
</feature>
<feature type="disulfide bond" evidence="1">
    <location>
        <begin position="734"/>
        <end position="747"/>
    </location>
</feature>
<feature type="disulfide bond" evidence="1">
    <location>
        <begin position="752"/>
        <end position="778"/>
    </location>
</feature>
<feature type="disulfide bond" evidence="1">
    <location>
        <begin position="805"/>
        <end position="827"/>
    </location>
</feature>
<feature type="disulfide bond" evidence="1">
    <location>
        <begin position="865"/>
        <end position="895"/>
    </location>
</feature>
<feature type="disulfide bond" evidence="1">
    <location>
        <begin position="922"/>
        <end position="944"/>
    </location>
</feature>
<feature type="sequence conflict" description="In Ref. 1; AAA37306." evidence="13" ref="1">
    <original>APL</original>
    <variation>VWV</variation>
    <location>
        <begin position="395"/>
        <end position="397"/>
    </location>
</feature>
<feature type="sequence conflict" description="In Ref. 1; AAA37306." evidence="13" ref="1">
    <original>K</original>
    <variation>N</variation>
    <location>
        <position position="519"/>
    </location>
</feature>
<accession>P98063</accession>
<accession>Q6NZM2</accession>